<name>URK_LACPL</name>
<accession>Q88WR0</accession>
<accession>F9UNU1</accession>
<sequence>MTENKHRRPVVIGVTGGSGSGKTTVSNAIYNQLSGQSLLILQQDSYYNDQSEMTMAERHAVNYDHPLAFDTDLMIKQIKQLLAYQPIEKPVYDYEQYTRSDKTIHQEPRDVIIVEGVLILDDQRLRDLMDIKVFVDTDDDIRIIRRIQRDIKERGRTLDSVIGQYLATVKPMYHQFVEPTKRYADLIVPEGGENEVAIDLLTTKVRSIL</sequence>
<keyword id="KW-0067">ATP-binding</keyword>
<keyword id="KW-0963">Cytoplasm</keyword>
<keyword id="KW-0418">Kinase</keyword>
<keyword id="KW-0547">Nucleotide-binding</keyword>
<keyword id="KW-1185">Reference proteome</keyword>
<keyword id="KW-0808">Transferase</keyword>
<evidence type="ECO:0000255" key="1">
    <source>
        <dbReference type="HAMAP-Rule" id="MF_00551"/>
    </source>
</evidence>
<protein>
    <recommendedName>
        <fullName evidence="1">Uridine kinase</fullName>
        <ecNumber evidence="1">2.7.1.48</ecNumber>
    </recommendedName>
    <alternativeName>
        <fullName evidence="1">Cytidine monophosphokinase</fullName>
    </alternativeName>
    <alternativeName>
        <fullName evidence="1">Uridine monophosphokinase</fullName>
    </alternativeName>
</protein>
<gene>
    <name evidence="1" type="primary">udk</name>
    <name type="ordered locus">lp_1562</name>
</gene>
<comment type="catalytic activity">
    <reaction evidence="1">
        <text>uridine + ATP = UMP + ADP + H(+)</text>
        <dbReference type="Rhea" id="RHEA:16825"/>
        <dbReference type="ChEBI" id="CHEBI:15378"/>
        <dbReference type="ChEBI" id="CHEBI:16704"/>
        <dbReference type="ChEBI" id="CHEBI:30616"/>
        <dbReference type="ChEBI" id="CHEBI:57865"/>
        <dbReference type="ChEBI" id="CHEBI:456216"/>
        <dbReference type="EC" id="2.7.1.48"/>
    </reaction>
</comment>
<comment type="catalytic activity">
    <reaction evidence="1">
        <text>cytidine + ATP = CMP + ADP + H(+)</text>
        <dbReference type="Rhea" id="RHEA:24674"/>
        <dbReference type="ChEBI" id="CHEBI:15378"/>
        <dbReference type="ChEBI" id="CHEBI:17562"/>
        <dbReference type="ChEBI" id="CHEBI:30616"/>
        <dbReference type="ChEBI" id="CHEBI:60377"/>
        <dbReference type="ChEBI" id="CHEBI:456216"/>
        <dbReference type="EC" id="2.7.1.48"/>
    </reaction>
</comment>
<comment type="pathway">
    <text evidence="1">Pyrimidine metabolism; CTP biosynthesis via salvage pathway; CTP from cytidine: step 1/3.</text>
</comment>
<comment type="pathway">
    <text evidence="1">Pyrimidine metabolism; UMP biosynthesis via salvage pathway; UMP from uridine: step 1/1.</text>
</comment>
<comment type="subcellular location">
    <subcellularLocation>
        <location evidence="1">Cytoplasm</location>
    </subcellularLocation>
</comment>
<comment type="similarity">
    <text evidence="1">Belongs to the uridine kinase family.</text>
</comment>
<dbReference type="EC" id="2.7.1.48" evidence="1"/>
<dbReference type="EMBL" id="AL935263">
    <property type="protein sequence ID" value="CCC78880.1"/>
    <property type="molecule type" value="Genomic_DNA"/>
</dbReference>
<dbReference type="RefSeq" id="WP_003640313.1">
    <property type="nucleotide sequence ID" value="NC_004567.2"/>
</dbReference>
<dbReference type="RefSeq" id="YP_004889394.1">
    <property type="nucleotide sequence ID" value="NC_004567.2"/>
</dbReference>
<dbReference type="SMR" id="Q88WR0"/>
<dbReference type="STRING" id="220668.lp_1562"/>
<dbReference type="EnsemblBacteria" id="CCC78880">
    <property type="protein sequence ID" value="CCC78880"/>
    <property type="gene ID" value="lp_1562"/>
</dbReference>
<dbReference type="GeneID" id="77217981"/>
<dbReference type="KEGG" id="lpl:lp_1562"/>
<dbReference type="PATRIC" id="fig|220668.9.peg.1314"/>
<dbReference type="eggNOG" id="COG0572">
    <property type="taxonomic scope" value="Bacteria"/>
</dbReference>
<dbReference type="HOGENOM" id="CLU_021278_1_2_9"/>
<dbReference type="OrthoDB" id="9777642at2"/>
<dbReference type="PhylomeDB" id="Q88WR0"/>
<dbReference type="UniPathway" id="UPA00574">
    <property type="reaction ID" value="UER00637"/>
</dbReference>
<dbReference type="UniPathway" id="UPA00579">
    <property type="reaction ID" value="UER00640"/>
</dbReference>
<dbReference type="Proteomes" id="UP000000432">
    <property type="component" value="Chromosome"/>
</dbReference>
<dbReference type="GO" id="GO:0005737">
    <property type="term" value="C:cytoplasm"/>
    <property type="evidence" value="ECO:0007669"/>
    <property type="project" value="UniProtKB-SubCell"/>
</dbReference>
<dbReference type="GO" id="GO:0005524">
    <property type="term" value="F:ATP binding"/>
    <property type="evidence" value="ECO:0007669"/>
    <property type="project" value="UniProtKB-UniRule"/>
</dbReference>
<dbReference type="GO" id="GO:0043771">
    <property type="term" value="F:cytidine kinase activity"/>
    <property type="evidence" value="ECO:0007669"/>
    <property type="project" value="RHEA"/>
</dbReference>
<dbReference type="GO" id="GO:0004849">
    <property type="term" value="F:uridine kinase activity"/>
    <property type="evidence" value="ECO:0007669"/>
    <property type="project" value="UniProtKB-UniRule"/>
</dbReference>
<dbReference type="GO" id="GO:0044211">
    <property type="term" value="P:CTP salvage"/>
    <property type="evidence" value="ECO:0007669"/>
    <property type="project" value="UniProtKB-UniRule"/>
</dbReference>
<dbReference type="GO" id="GO:0044206">
    <property type="term" value="P:UMP salvage"/>
    <property type="evidence" value="ECO:0007669"/>
    <property type="project" value="UniProtKB-UniRule"/>
</dbReference>
<dbReference type="CDD" id="cd02023">
    <property type="entry name" value="UMPK"/>
    <property type="match status" value="1"/>
</dbReference>
<dbReference type="Gene3D" id="3.40.50.300">
    <property type="entry name" value="P-loop containing nucleotide triphosphate hydrolases"/>
    <property type="match status" value="1"/>
</dbReference>
<dbReference type="HAMAP" id="MF_00551">
    <property type="entry name" value="Uridine_kinase"/>
    <property type="match status" value="1"/>
</dbReference>
<dbReference type="InterPro" id="IPR027417">
    <property type="entry name" value="P-loop_NTPase"/>
</dbReference>
<dbReference type="InterPro" id="IPR006083">
    <property type="entry name" value="PRK/URK"/>
</dbReference>
<dbReference type="InterPro" id="IPR026008">
    <property type="entry name" value="Uridine_kinase"/>
</dbReference>
<dbReference type="InterPro" id="IPR000764">
    <property type="entry name" value="Uridine_kinase-like"/>
</dbReference>
<dbReference type="NCBIfam" id="NF004018">
    <property type="entry name" value="PRK05480.1"/>
    <property type="match status" value="1"/>
</dbReference>
<dbReference type="NCBIfam" id="TIGR00235">
    <property type="entry name" value="udk"/>
    <property type="match status" value="1"/>
</dbReference>
<dbReference type="PANTHER" id="PTHR10285">
    <property type="entry name" value="URIDINE KINASE"/>
    <property type="match status" value="1"/>
</dbReference>
<dbReference type="Pfam" id="PF00485">
    <property type="entry name" value="PRK"/>
    <property type="match status" value="1"/>
</dbReference>
<dbReference type="PRINTS" id="PR00988">
    <property type="entry name" value="URIDINKINASE"/>
</dbReference>
<dbReference type="SUPFAM" id="SSF52540">
    <property type="entry name" value="P-loop containing nucleoside triphosphate hydrolases"/>
    <property type="match status" value="1"/>
</dbReference>
<proteinExistence type="inferred from homology"/>
<feature type="chain" id="PRO_0000164476" description="Uridine kinase">
    <location>
        <begin position="1"/>
        <end position="209"/>
    </location>
</feature>
<feature type="binding site" evidence="1">
    <location>
        <begin position="16"/>
        <end position="23"/>
    </location>
    <ligand>
        <name>ATP</name>
        <dbReference type="ChEBI" id="CHEBI:30616"/>
    </ligand>
</feature>
<organism>
    <name type="scientific">Lactiplantibacillus plantarum (strain ATCC BAA-793 / NCIMB 8826 / WCFS1)</name>
    <name type="common">Lactobacillus plantarum</name>
    <dbReference type="NCBI Taxonomy" id="220668"/>
    <lineage>
        <taxon>Bacteria</taxon>
        <taxon>Bacillati</taxon>
        <taxon>Bacillota</taxon>
        <taxon>Bacilli</taxon>
        <taxon>Lactobacillales</taxon>
        <taxon>Lactobacillaceae</taxon>
        <taxon>Lactiplantibacillus</taxon>
    </lineage>
</organism>
<reference key="1">
    <citation type="journal article" date="2003" name="Proc. Natl. Acad. Sci. U.S.A.">
        <title>Complete genome sequence of Lactobacillus plantarum WCFS1.</title>
        <authorList>
            <person name="Kleerebezem M."/>
            <person name="Boekhorst J."/>
            <person name="van Kranenburg R."/>
            <person name="Molenaar D."/>
            <person name="Kuipers O.P."/>
            <person name="Leer R."/>
            <person name="Tarchini R."/>
            <person name="Peters S.A."/>
            <person name="Sandbrink H.M."/>
            <person name="Fiers M.W.E.J."/>
            <person name="Stiekema W."/>
            <person name="Klein Lankhorst R.M."/>
            <person name="Bron P.A."/>
            <person name="Hoffer S.M."/>
            <person name="Nierop Groot M.N."/>
            <person name="Kerkhoven R."/>
            <person name="De Vries M."/>
            <person name="Ursing B."/>
            <person name="De Vos W.M."/>
            <person name="Siezen R.J."/>
        </authorList>
    </citation>
    <scope>NUCLEOTIDE SEQUENCE [LARGE SCALE GENOMIC DNA]</scope>
    <source>
        <strain>ATCC BAA-793 / NCIMB 8826 / WCFS1</strain>
    </source>
</reference>
<reference key="2">
    <citation type="journal article" date="2012" name="J. Bacteriol.">
        <title>Complete resequencing and reannotation of the Lactobacillus plantarum WCFS1 genome.</title>
        <authorList>
            <person name="Siezen R.J."/>
            <person name="Francke C."/>
            <person name="Renckens B."/>
            <person name="Boekhorst J."/>
            <person name="Wels M."/>
            <person name="Kleerebezem M."/>
            <person name="van Hijum S.A."/>
        </authorList>
    </citation>
    <scope>NUCLEOTIDE SEQUENCE [LARGE SCALE GENOMIC DNA]</scope>
    <scope>GENOME REANNOTATION</scope>
    <source>
        <strain>ATCC BAA-793 / NCIMB 8826 / WCFS1</strain>
    </source>
</reference>